<evidence type="ECO:0000255" key="1">
    <source>
        <dbReference type="HAMAP-Rule" id="MF_00736"/>
    </source>
</evidence>
<evidence type="ECO:0000305" key="2"/>
<organism>
    <name type="scientific">Parafrankia sp. (strain EAN1pec)</name>
    <dbReference type="NCBI Taxonomy" id="298653"/>
    <lineage>
        <taxon>Bacteria</taxon>
        <taxon>Bacillati</taxon>
        <taxon>Actinomycetota</taxon>
        <taxon>Actinomycetes</taxon>
        <taxon>Frankiales</taxon>
        <taxon>Frankiaceae</taxon>
        <taxon>Parafrankia</taxon>
    </lineage>
</organism>
<dbReference type="EMBL" id="CP000820">
    <property type="protein sequence ID" value="ABW15405.1"/>
    <property type="molecule type" value="Genomic_DNA"/>
</dbReference>
<dbReference type="RefSeq" id="WP_018505143.1">
    <property type="nucleotide sequence ID" value="NC_009921.1"/>
</dbReference>
<dbReference type="SMR" id="A8LC68"/>
<dbReference type="STRING" id="298653.Franean1_6061"/>
<dbReference type="KEGG" id="fre:Franean1_6061"/>
<dbReference type="eggNOG" id="COG0080">
    <property type="taxonomic scope" value="Bacteria"/>
</dbReference>
<dbReference type="HOGENOM" id="CLU_074237_2_1_11"/>
<dbReference type="GO" id="GO:0022625">
    <property type="term" value="C:cytosolic large ribosomal subunit"/>
    <property type="evidence" value="ECO:0007669"/>
    <property type="project" value="TreeGrafter"/>
</dbReference>
<dbReference type="GO" id="GO:0070180">
    <property type="term" value="F:large ribosomal subunit rRNA binding"/>
    <property type="evidence" value="ECO:0007669"/>
    <property type="project" value="UniProtKB-UniRule"/>
</dbReference>
<dbReference type="GO" id="GO:0003735">
    <property type="term" value="F:structural constituent of ribosome"/>
    <property type="evidence" value="ECO:0007669"/>
    <property type="project" value="InterPro"/>
</dbReference>
<dbReference type="GO" id="GO:0006412">
    <property type="term" value="P:translation"/>
    <property type="evidence" value="ECO:0007669"/>
    <property type="project" value="UniProtKB-UniRule"/>
</dbReference>
<dbReference type="CDD" id="cd00349">
    <property type="entry name" value="Ribosomal_L11"/>
    <property type="match status" value="1"/>
</dbReference>
<dbReference type="FunFam" id="1.10.10.250:FF:000001">
    <property type="entry name" value="50S ribosomal protein L11"/>
    <property type="match status" value="1"/>
</dbReference>
<dbReference type="FunFam" id="3.30.1550.10:FF:000001">
    <property type="entry name" value="50S ribosomal protein L11"/>
    <property type="match status" value="1"/>
</dbReference>
<dbReference type="Gene3D" id="1.10.10.250">
    <property type="entry name" value="Ribosomal protein L11, C-terminal domain"/>
    <property type="match status" value="1"/>
</dbReference>
<dbReference type="Gene3D" id="3.30.1550.10">
    <property type="entry name" value="Ribosomal protein L11/L12, N-terminal domain"/>
    <property type="match status" value="1"/>
</dbReference>
<dbReference type="HAMAP" id="MF_00736">
    <property type="entry name" value="Ribosomal_uL11"/>
    <property type="match status" value="1"/>
</dbReference>
<dbReference type="InterPro" id="IPR000911">
    <property type="entry name" value="Ribosomal_uL11"/>
</dbReference>
<dbReference type="InterPro" id="IPR006519">
    <property type="entry name" value="Ribosomal_uL11_bac-typ"/>
</dbReference>
<dbReference type="InterPro" id="IPR020783">
    <property type="entry name" value="Ribosomal_uL11_C"/>
</dbReference>
<dbReference type="InterPro" id="IPR036769">
    <property type="entry name" value="Ribosomal_uL11_C_sf"/>
</dbReference>
<dbReference type="InterPro" id="IPR020785">
    <property type="entry name" value="Ribosomal_uL11_CS"/>
</dbReference>
<dbReference type="InterPro" id="IPR020784">
    <property type="entry name" value="Ribosomal_uL11_N"/>
</dbReference>
<dbReference type="InterPro" id="IPR036796">
    <property type="entry name" value="Ribosomal_uL11_N_sf"/>
</dbReference>
<dbReference type="NCBIfam" id="TIGR01632">
    <property type="entry name" value="L11_bact"/>
    <property type="match status" value="1"/>
</dbReference>
<dbReference type="PANTHER" id="PTHR11661">
    <property type="entry name" value="60S RIBOSOMAL PROTEIN L12"/>
    <property type="match status" value="1"/>
</dbReference>
<dbReference type="PANTHER" id="PTHR11661:SF1">
    <property type="entry name" value="LARGE RIBOSOMAL SUBUNIT PROTEIN UL11M"/>
    <property type="match status" value="1"/>
</dbReference>
<dbReference type="Pfam" id="PF00298">
    <property type="entry name" value="Ribosomal_L11"/>
    <property type="match status" value="1"/>
</dbReference>
<dbReference type="Pfam" id="PF03946">
    <property type="entry name" value="Ribosomal_L11_N"/>
    <property type="match status" value="1"/>
</dbReference>
<dbReference type="SMART" id="SM00649">
    <property type="entry name" value="RL11"/>
    <property type="match status" value="1"/>
</dbReference>
<dbReference type="SUPFAM" id="SSF54747">
    <property type="entry name" value="Ribosomal L11/L12e N-terminal domain"/>
    <property type="match status" value="1"/>
</dbReference>
<dbReference type="SUPFAM" id="SSF46906">
    <property type="entry name" value="Ribosomal protein L11, C-terminal domain"/>
    <property type="match status" value="1"/>
</dbReference>
<dbReference type="PROSITE" id="PS00359">
    <property type="entry name" value="RIBOSOMAL_L11"/>
    <property type="match status" value="1"/>
</dbReference>
<proteinExistence type="inferred from homology"/>
<reference key="1">
    <citation type="journal article" date="2007" name="Genome Res.">
        <title>Genome characteristics of facultatively symbiotic Frankia sp. strains reflect host range and host plant biogeography.</title>
        <authorList>
            <person name="Normand P."/>
            <person name="Lapierre P."/>
            <person name="Tisa L.S."/>
            <person name="Gogarten J.P."/>
            <person name="Alloisio N."/>
            <person name="Bagnarol E."/>
            <person name="Bassi C.A."/>
            <person name="Berry A.M."/>
            <person name="Bickhart D.M."/>
            <person name="Choisne N."/>
            <person name="Couloux A."/>
            <person name="Cournoyer B."/>
            <person name="Cruveiller S."/>
            <person name="Daubin V."/>
            <person name="Demange N."/>
            <person name="Francino M.P."/>
            <person name="Goltsman E."/>
            <person name="Huang Y."/>
            <person name="Kopp O.R."/>
            <person name="Labarre L."/>
            <person name="Lapidus A."/>
            <person name="Lavire C."/>
            <person name="Marechal J."/>
            <person name="Martinez M."/>
            <person name="Mastronunzio J.E."/>
            <person name="Mullin B.C."/>
            <person name="Niemann J."/>
            <person name="Pujic P."/>
            <person name="Rawnsley T."/>
            <person name="Rouy Z."/>
            <person name="Schenowitz C."/>
            <person name="Sellstedt A."/>
            <person name="Tavares F."/>
            <person name="Tomkins J.P."/>
            <person name="Vallenet D."/>
            <person name="Valverde C."/>
            <person name="Wall L.G."/>
            <person name="Wang Y."/>
            <person name="Medigue C."/>
            <person name="Benson D.R."/>
        </authorList>
    </citation>
    <scope>NUCLEOTIDE SEQUENCE [LARGE SCALE GENOMIC DNA]</scope>
    <source>
        <strain>EAN1pec</strain>
    </source>
</reference>
<feature type="chain" id="PRO_1000195642" description="Large ribosomal subunit protein uL11">
    <location>
        <begin position="1"/>
        <end position="144"/>
    </location>
</feature>
<sequence length="144" mass="15183">MPPKKKKITALIKLQINAGKATPAPPVGPALGQHGVNIMEFCKQYNAATESQTGNVVPVEITVYDDRSFTFVTKTPPAARLILKAAGVDKGSGTPHRVKVAKLTPAQVREIAQTKLPDLNANSIEAAEKIIAGTARSMGITVGE</sequence>
<gene>
    <name evidence="1" type="primary">rplK</name>
    <name type="ordered locus">Franean1_6061</name>
</gene>
<comment type="function">
    <text evidence="1">Forms part of the ribosomal stalk which helps the ribosome interact with GTP-bound translation factors.</text>
</comment>
<comment type="subunit">
    <text evidence="1">Part of the ribosomal stalk of the 50S ribosomal subunit. Interacts with L10 and the large rRNA to form the base of the stalk. L10 forms an elongated spine to which L12 dimers bind in a sequential fashion forming a multimeric L10(L12)X complex.</text>
</comment>
<comment type="PTM">
    <text evidence="1">One or more lysine residues are methylated.</text>
</comment>
<comment type="similarity">
    <text evidence="1">Belongs to the universal ribosomal protein uL11 family.</text>
</comment>
<keyword id="KW-0488">Methylation</keyword>
<keyword id="KW-0687">Ribonucleoprotein</keyword>
<keyword id="KW-0689">Ribosomal protein</keyword>
<keyword id="KW-0694">RNA-binding</keyword>
<keyword id="KW-0699">rRNA-binding</keyword>
<protein>
    <recommendedName>
        <fullName evidence="1">Large ribosomal subunit protein uL11</fullName>
    </recommendedName>
    <alternativeName>
        <fullName evidence="2">50S ribosomal protein L11</fullName>
    </alternativeName>
</protein>
<accession>A8LC68</accession>
<name>RL11_PARS2</name>